<feature type="chain" id="PRO_0000242538" description="Protein Ycf2">
    <location>
        <begin position="1"/>
        <end position="2278"/>
    </location>
</feature>
<feature type="binding site" evidence="1">
    <location>
        <begin position="1632"/>
        <end position="1639"/>
    </location>
    <ligand>
        <name>ATP</name>
        <dbReference type="ChEBI" id="CHEBI:30616"/>
    </ligand>
</feature>
<feature type="sequence conflict" description="In Ref. 1; ABB90081/ABB90099." evidence="2" ref="1">
    <original>S</original>
    <variation>P</variation>
    <location>
        <position position="1188"/>
    </location>
</feature>
<feature type="sequence conflict" description="In Ref. 1; ABB90081/ABB90099." evidence="2" ref="1">
    <original>SYVPFITVFLNKF</original>
    <variation>FLCSFHYGISEQV</variation>
    <location>
        <begin position="1649"/>
        <end position="1661"/>
    </location>
</feature>
<feature type="sequence conflict" description="In Ref. 1; ABB90081/ABB90099." evidence="2" ref="1">
    <original>F</original>
    <variation>S</variation>
    <location>
        <position position="2269"/>
    </location>
</feature>
<reference key="1">
    <citation type="journal article" date="2006" name="Plant Cell Rep.">
        <title>The complete chloroplast genome sequences of Solanum tuberosum and comparative analysis with Solanaceae species identified the presence of a 241-bp deletion in cultivated potato chloroplast DNA sequence.</title>
        <authorList>
            <person name="Chung H.-J."/>
            <person name="Jung J.D."/>
            <person name="Park H.-W."/>
            <person name="Kim J.-H."/>
            <person name="Cha H.W."/>
            <person name="Min S.R."/>
            <person name="Jeong W.-J."/>
            <person name="Liu J.R."/>
        </authorList>
    </citation>
    <scope>NUCLEOTIDE SEQUENCE [LARGE SCALE GENOMIC DNA]</scope>
    <source>
        <strain>cv. Desiree</strain>
    </source>
</reference>
<reference key="2">
    <citation type="submission" date="2006-02" db="EMBL/GenBank/DDBJ databases">
        <title>Complete chloroplast genome sequences of Solanum tuberosum cultivar Desiree and comparative analyses with other Solanaceae genomes.</title>
        <authorList>
            <person name="Gargano D."/>
            <person name="Scotti N."/>
            <person name="Vezzi A."/>
            <person name="Bilardi A."/>
            <person name="Valle G."/>
            <person name="Grillo S."/>
            <person name="Cardi T."/>
        </authorList>
    </citation>
    <scope>NUCLEOTIDE SEQUENCE [LARGE SCALE GENOMIC DNA]</scope>
    <source>
        <strain>cv. Desiree</strain>
    </source>
</reference>
<comment type="function">
    <text>Probable ATPase of unknown function. Its presence in a non-photosynthetic plant (Epifagus virginiana) and experiments in tobacco indicate that it has an essential function which is probably not related to photosynthesis.</text>
</comment>
<comment type="subcellular location">
    <subcellularLocation>
        <location evidence="1">Plastid</location>
        <location evidence="1">Chloroplast stroma</location>
    </subcellularLocation>
</comment>
<comment type="similarity">
    <text evidence="1">Belongs to the Ycf2 family.</text>
</comment>
<name>YCF2_SOLTU</name>
<dbReference type="EMBL" id="DQ231562">
    <property type="protein sequence ID" value="ABB90081.1"/>
    <property type="molecule type" value="Genomic_DNA"/>
</dbReference>
<dbReference type="EMBL" id="DQ231562">
    <property type="protein sequence ID" value="ABB90099.1"/>
    <property type="molecule type" value="Genomic_DNA"/>
</dbReference>
<dbReference type="EMBL" id="DQ386163">
    <property type="protein sequence ID" value="ABD47099.1"/>
    <property type="molecule type" value="Genomic_DNA"/>
</dbReference>
<dbReference type="EMBL" id="DQ386163">
    <property type="protein sequence ID" value="ABD47119.1"/>
    <property type="molecule type" value="Genomic_DNA"/>
</dbReference>
<dbReference type="FunCoup" id="Q27RY7">
    <property type="interactions" value="10"/>
</dbReference>
<dbReference type="STRING" id="4113.Q27RY7"/>
<dbReference type="PaxDb" id="4113-PGSC0003DMT400053314"/>
<dbReference type="KEGG" id="sot:4099888"/>
<dbReference type="KEGG" id="sot:4099925"/>
<dbReference type="eggNOG" id="ENOG502QRDV">
    <property type="taxonomic scope" value="Eukaryota"/>
</dbReference>
<dbReference type="InParanoid" id="Q27RY7"/>
<dbReference type="OrthoDB" id="1669967at2759"/>
<dbReference type="Proteomes" id="UP000011115">
    <property type="component" value="Unassembled WGS sequence"/>
</dbReference>
<dbReference type="GO" id="GO:0009570">
    <property type="term" value="C:chloroplast stroma"/>
    <property type="evidence" value="ECO:0007669"/>
    <property type="project" value="UniProtKB-SubCell"/>
</dbReference>
<dbReference type="GO" id="GO:0005524">
    <property type="term" value="F:ATP binding"/>
    <property type="evidence" value="ECO:0007669"/>
    <property type="project" value="UniProtKB-KW"/>
</dbReference>
<dbReference type="GO" id="GO:0016887">
    <property type="term" value="F:ATP hydrolysis activity"/>
    <property type="evidence" value="ECO:0007669"/>
    <property type="project" value="InterPro"/>
</dbReference>
<dbReference type="CDD" id="cd19505">
    <property type="entry name" value="RecA-like_Ycf2"/>
    <property type="match status" value="1"/>
</dbReference>
<dbReference type="Gene3D" id="3.40.50.300">
    <property type="entry name" value="P-loop containing nucleotide triphosphate hydrolases"/>
    <property type="match status" value="1"/>
</dbReference>
<dbReference type="HAMAP" id="MF_01330">
    <property type="entry name" value="Ycf2"/>
    <property type="match status" value="1"/>
</dbReference>
<dbReference type="InterPro" id="IPR003593">
    <property type="entry name" value="AAA+_ATPase"/>
</dbReference>
<dbReference type="InterPro" id="IPR003959">
    <property type="entry name" value="ATPase_AAA_core"/>
</dbReference>
<dbReference type="InterPro" id="IPR027417">
    <property type="entry name" value="P-loop_NTPase"/>
</dbReference>
<dbReference type="InterPro" id="IPR008543">
    <property type="entry name" value="Uncharacterised_Ycf2"/>
</dbReference>
<dbReference type="InterPro" id="IPR056777">
    <property type="entry name" value="Ycf2_N"/>
</dbReference>
<dbReference type="PANTHER" id="PTHR33078:SF51">
    <property type="entry name" value="PROTEIN TIC 214"/>
    <property type="match status" value="1"/>
</dbReference>
<dbReference type="PANTHER" id="PTHR33078">
    <property type="entry name" value="PROTEIN YCF2-RELATED"/>
    <property type="match status" value="1"/>
</dbReference>
<dbReference type="Pfam" id="PF00004">
    <property type="entry name" value="AAA"/>
    <property type="match status" value="1"/>
</dbReference>
<dbReference type="Pfam" id="PF05695">
    <property type="entry name" value="Ycf2"/>
    <property type="match status" value="1"/>
</dbReference>
<dbReference type="SMART" id="SM00382">
    <property type="entry name" value="AAA"/>
    <property type="match status" value="1"/>
</dbReference>
<dbReference type="SUPFAM" id="SSF52540">
    <property type="entry name" value="P-loop containing nucleoside triphosphate hydrolases"/>
    <property type="match status" value="1"/>
</dbReference>
<proteinExistence type="inferred from homology"/>
<gene>
    <name evidence="1" type="primary">ycf2-A</name>
</gene>
<gene>
    <name evidence="1" type="primary">ycf2-B</name>
</gene>
<organism>
    <name type="scientific">Solanum tuberosum</name>
    <name type="common">Potato</name>
    <dbReference type="NCBI Taxonomy" id="4113"/>
    <lineage>
        <taxon>Eukaryota</taxon>
        <taxon>Viridiplantae</taxon>
        <taxon>Streptophyta</taxon>
        <taxon>Embryophyta</taxon>
        <taxon>Tracheophyta</taxon>
        <taxon>Spermatophyta</taxon>
        <taxon>Magnoliopsida</taxon>
        <taxon>eudicotyledons</taxon>
        <taxon>Gunneridae</taxon>
        <taxon>Pentapetalae</taxon>
        <taxon>asterids</taxon>
        <taxon>lamiids</taxon>
        <taxon>Solanales</taxon>
        <taxon>Solanaceae</taxon>
        <taxon>Solanoideae</taxon>
        <taxon>Solaneae</taxon>
        <taxon>Solanum</taxon>
    </lineage>
</organism>
<sequence>MRGHQFKSWIFELREILREIKNSHHFLDSWTQFNSVGSFIHIFFHQERFLKLFDPRIWSILLSRNSQGSTSNRYFTIKGVILFVVAVLIYRINNRNMVERKNLYLIGLLPIPMNSIGPRNDTLEESVGSSNINRLIVSLLYLPKGKKISESCFLNPKESTWVLPITKKCSMPESNWGSRWWRNWIGKKRDSSCKISNETVAGIEILFKEKDLKYLEFLFVYYMDDPIRKDHDWELFDRLSLRKSRNRINLNSGPLFEILVKHWISYLMSAFREKIPIEVEGFFKQQGAGSTIQSNDIEHVSHLFSRNKWAISLQNCAQFHMWQFRQDLFVSWGKNPPESDFLRNVSRENWIWLDNVWLVNKDRFFSKVQNVSSNIQYDSTRSSFVQVTDSSQLKGSSDQSRDHLDSISNEDSEYHTLINQREIQQRKERSILWDPSFLQTERKEIESGRFPKCLSGYSSMSRLFTEREKQMINHLFPEEIEEFLGNPTRSVRSFFSDRWSELHLGSNPTERSTRDQKLLKKQQDLSFVPSRRSEKKEMVNIFKIITYLQNTVSIHPISSDPGCDMVPKDEPDMDSSNKISFLNKNPFFDLFHLFHDRNRGGYTLHYDFASEERFQEMADLFTLSITEPDLVYHKGFAFSIDSCGLDQKQFLNEARDESKKKSLLVLPPIFYEENESFSRRIRKKWVRISCGNDLEDPKPKIVVFASNNIMEAVTQYRLIRNLIQIQYSTYGYIRNVLNRFFLMNRSDRNFEYGIQRDQIGKDTLNHRTIMKYTINQYLSNLKKSQKKWFEPLILISRTERSMNRDPDAYRYKWSNGSKSFQEHLEQSVSEQKSRFQVVFDRLRINQYSIDWSEVIDKKDLSKSLRFFLSKSLLFLSKLLLFLSNSLPFFCVSFGNIPIHRSEIYIYEELKGPNDQLCNQLLESIGLQIVHLKKLKPFLLDDHDTSQKSKFLINGGTISPFLFNKIPKWMIDSFHTRNNRRKSFDNPDSYFSMIFHDQDNWLNPVKPFHRSSLISSFYKANRLRFLNNPHHFCFYWNTRFPFSVEKARINNSDFTYGQFLNILFIRNKIFSLCVGKKKHAFWGRDTISPIESQVSNIFIPNDFPQSGDETYNLYKSFHFPSRSDPFVRRAIYSIADISGTPLTEGQIVNFERTYCQPLSDMNLSDSEGKNLHQYLNFNSNMGLIHTPCSEKDLSSEKRKKWSLCLKKCVEKGQMYRTFQRDSAFSTLSKWNLFQTYMPWFLTSTGYKYLNLIFLDTFSDLLPILSSSQKFVSIFPDIMHGSGISWRILQKKLCLPQWNLISEISSKCLHNLLLSEEMIHRNNESPLISTHLRSPNAREFLYSILFLLLVAGYLVRTHLLFVSRASSELQTEFEKVKSLMIPSSMIELRKLLDRYPTSEPNSFWLKNLFLVALEQLGDSLEEIRGSASGGNMLGPAYGVKSIRSKKKDWNINLIEIIDLIPNPINRITFSRNTRHLSHTSKEIYSLIRKRKNVNGDWIDEKIESWVANSDSIDDEEREFLVQFSTLTTENRIDQILLSLTHSDHLSKNDSGYQMIEQPGAIYLRYLVDIHKKHLMNYEFNPSCLAERRIFLAHYQTITYSQTSCGENSFHFPSPGKPFSLRLALSPSRGILVIGSIGTGRSYLVKYLATNSYVPFITVFLNKFLDNKSKGFLLDEIDIDDSDDIDDSDNLDASDDIDRDLDTELELLTRMNGLTVDMMPEIDRFYITLQFELAKAMSPCIIWIPNIHDLDVNESNDLSLGLLVNHLSRDCERCSTRNILVIASTHIPQKVDPALIAPNKLNTCIKIRRLLIPQQRKHFFTLSYTRGFHLEKKMFHTNGFGSITMGSNARDLVALTNEVLSISITQKKSIIDTNTIRSALHRQTWDLRSQVRSVQDHGILFYQIGRAVAQNVLLSNCPIDPISIYMKKKSCNEGDSYLYKWYFELGTSMKRLTILLYLLSCSAGSVAQDLWSLSVPDEKNGITSYGLVENDSDLVHGLLEVEGALVGSSRTEKDCSQFDNDRVTLLLRPEPRNPLDMMQKGSWSILDQRFLYEKYESEFEEGEGEGALDPQEDLFNHIVWAPRIWRPWGFLFDCIERPNELGFPYWSRSFRGKRIIYDEEDELQENDSGFLQSGTMQYQTRDRSQGLFRISQFIWDPADPLFFLFKDQPPGSVFSHRELFADEEMSKGLLTSQTDPPTSIYKRWFIKNTQEKHFELLINRQRWLRTNSSLSNGSFRSNTLSESYQYLSNLFLSNGTLLDQMPKTLLRKRWLFPDEMKIGFM</sequence>
<accession>Q27RY7</accession>
<accession>Q2VEB9</accession>
<protein>
    <recommendedName>
        <fullName evidence="1">Protein Ycf2</fullName>
    </recommendedName>
</protein>
<evidence type="ECO:0000255" key="1">
    <source>
        <dbReference type="HAMAP-Rule" id="MF_01330"/>
    </source>
</evidence>
<evidence type="ECO:0000305" key="2"/>
<geneLocation type="chloroplast"/>
<keyword id="KW-0067">ATP-binding</keyword>
<keyword id="KW-0150">Chloroplast</keyword>
<keyword id="KW-0547">Nucleotide-binding</keyword>
<keyword id="KW-0934">Plastid</keyword>
<keyword id="KW-1185">Reference proteome</keyword>